<comment type="function">
    <text evidence="1">Involved in pre-rRNA processing.</text>
</comment>
<comment type="subcellular location">
    <subcellularLocation>
        <location evidence="1">Nucleus</location>
    </subcellularLocation>
</comment>
<comment type="similarity">
    <text evidence="4">Belongs to the RRM MRD1 family.</text>
</comment>
<accession>Q75A83</accession>
<keyword id="KW-0539">Nucleus</keyword>
<keyword id="KW-1185">Reference proteome</keyword>
<keyword id="KW-0677">Repeat</keyword>
<keyword id="KW-0687">Ribonucleoprotein</keyword>
<keyword id="KW-0694">RNA-binding</keyword>
<keyword id="KW-0698">rRNA processing</keyword>
<dbReference type="EMBL" id="AE016817">
    <property type="protein sequence ID" value="AAS51955.2"/>
    <property type="molecule type" value="Genomic_DNA"/>
</dbReference>
<dbReference type="RefSeq" id="NP_984131.2">
    <property type="nucleotide sequence ID" value="NM_209484.2"/>
</dbReference>
<dbReference type="SMR" id="Q75A83"/>
<dbReference type="FunCoup" id="Q75A83">
    <property type="interactions" value="1252"/>
</dbReference>
<dbReference type="STRING" id="284811.Q75A83"/>
<dbReference type="EnsemblFungi" id="AAS51955">
    <property type="protein sequence ID" value="AAS51955"/>
    <property type="gene ID" value="AGOS_ADR035C"/>
</dbReference>
<dbReference type="GeneID" id="4620280"/>
<dbReference type="KEGG" id="ago:AGOS_ADR035C"/>
<dbReference type="eggNOG" id="KOG0110">
    <property type="taxonomic scope" value="Eukaryota"/>
</dbReference>
<dbReference type="HOGENOM" id="CLU_008479_0_0_1"/>
<dbReference type="InParanoid" id="Q75A83"/>
<dbReference type="OMA" id="FNNTCIQ"/>
<dbReference type="OrthoDB" id="439639at2759"/>
<dbReference type="Proteomes" id="UP000000591">
    <property type="component" value="Chromosome IV"/>
</dbReference>
<dbReference type="GO" id="GO:0030686">
    <property type="term" value="C:90S preribosome"/>
    <property type="evidence" value="ECO:0007669"/>
    <property type="project" value="EnsemblFungi"/>
</dbReference>
<dbReference type="GO" id="GO:0016607">
    <property type="term" value="C:nuclear speck"/>
    <property type="evidence" value="ECO:0000318"/>
    <property type="project" value="GO_Central"/>
</dbReference>
<dbReference type="GO" id="GO:0005730">
    <property type="term" value="C:nucleolus"/>
    <property type="evidence" value="ECO:0000318"/>
    <property type="project" value="GO_Central"/>
</dbReference>
<dbReference type="GO" id="GO:0032040">
    <property type="term" value="C:small-subunit processome"/>
    <property type="evidence" value="ECO:0007669"/>
    <property type="project" value="EnsemblFungi"/>
</dbReference>
<dbReference type="GO" id="GO:0003723">
    <property type="term" value="F:RNA binding"/>
    <property type="evidence" value="ECO:0000318"/>
    <property type="project" value="GO_Central"/>
</dbReference>
<dbReference type="GO" id="GO:0042134">
    <property type="term" value="F:rRNA primary transcript binding"/>
    <property type="evidence" value="ECO:0007669"/>
    <property type="project" value="EnsemblFungi"/>
</dbReference>
<dbReference type="GO" id="GO:0000480">
    <property type="term" value="P:endonucleolytic cleavage in 5'-ETS of tricistronic rRNA transcript (SSU-rRNA, 5.8S rRNA, LSU-rRNA)"/>
    <property type="evidence" value="ECO:0007669"/>
    <property type="project" value="EnsemblFungi"/>
</dbReference>
<dbReference type="GO" id="GO:0000447">
    <property type="term" value="P:endonucleolytic cleavage in ITS1 to separate SSU-rRNA from 5.8S rRNA and LSU-rRNA from tricistronic rRNA transcript (SSU-rRNA, 5.8S rRNA, LSU-rRNA)"/>
    <property type="evidence" value="ECO:0007669"/>
    <property type="project" value="EnsemblFungi"/>
</dbReference>
<dbReference type="GO" id="GO:0000472">
    <property type="term" value="P:endonucleolytic cleavage to generate mature 5'-end of SSU-rRNA from (SSU-rRNA, 5.8S rRNA, LSU-rRNA)"/>
    <property type="evidence" value="ECO:0007669"/>
    <property type="project" value="EnsemblFungi"/>
</dbReference>
<dbReference type="GO" id="GO:0034462">
    <property type="term" value="P:small-subunit processome assembly"/>
    <property type="evidence" value="ECO:0007669"/>
    <property type="project" value="EnsemblFungi"/>
</dbReference>
<dbReference type="CDD" id="cd12565">
    <property type="entry name" value="RRM1_MRD1"/>
    <property type="match status" value="1"/>
</dbReference>
<dbReference type="CDD" id="cd12568">
    <property type="entry name" value="RRM3_MRD1"/>
    <property type="match status" value="1"/>
</dbReference>
<dbReference type="FunFam" id="3.30.70.330:FF:000247">
    <property type="entry name" value="Multiple RNA-binding domain-containing protein 1"/>
    <property type="match status" value="1"/>
</dbReference>
<dbReference type="FunFam" id="3.30.70.330:FF:000452">
    <property type="entry name" value="Multiple RNA-binding domain-containing protein 1"/>
    <property type="match status" value="1"/>
</dbReference>
<dbReference type="FunFam" id="3.30.70.330:FF:000459">
    <property type="entry name" value="Multiple RNA-binding domain-containing protein 1"/>
    <property type="match status" value="1"/>
</dbReference>
<dbReference type="FunFam" id="3.30.70.330:FF:000706">
    <property type="entry name" value="Multiple RNA-binding domain-containing protein 1"/>
    <property type="match status" value="1"/>
</dbReference>
<dbReference type="Gene3D" id="3.30.70.330">
    <property type="match status" value="5"/>
</dbReference>
<dbReference type="InterPro" id="IPR050502">
    <property type="entry name" value="Euk_RNA-bind_prot"/>
</dbReference>
<dbReference type="InterPro" id="IPR034482">
    <property type="entry name" value="Mrd1_RRM3"/>
</dbReference>
<dbReference type="InterPro" id="IPR012677">
    <property type="entry name" value="Nucleotide-bd_a/b_plait_sf"/>
</dbReference>
<dbReference type="InterPro" id="IPR035979">
    <property type="entry name" value="RBD_domain_sf"/>
</dbReference>
<dbReference type="InterPro" id="IPR000504">
    <property type="entry name" value="RRM_dom"/>
</dbReference>
<dbReference type="InterPro" id="IPR003954">
    <property type="entry name" value="RRM_dom_euk"/>
</dbReference>
<dbReference type="PANTHER" id="PTHR48025">
    <property type="entry name" value="OS02G0815200 PROTEIN"/>
    <property type="match status" value="1"/>
</dbReference>
<dbReference type="PANTHER" id="PTHR48025:SF1">
    <property type="entry name" value="RRM DOMAIN-CONTAINING PROTEIN"/>
    <property type="match status" value="1"/>
</dbReference>
<dbReference type="Pfam" id="PF00076">
    <property type="entry name" value="RRM_1"/>
    <property type="match status" value="5"/>
</dbReference>
<dbReference type="SMART" id="SM00360">
    <property type="entry name" value="RRM"/>
    <property type="match status" value="5"/>
</dbReference>
<dbReference type="SMART" id="SM00361">
    <property type="entry name" value="RRM_1"/>
    <property type="match status" value="2"/>
</dbReference>
<dbReference type="SUPFAM" id="SSF54928">
    <property type="entry name" value="RNA-binding domain, RBD"/>
    <property type="match status" value="4"/>
</dbReference>
<dbReference type="PROSITE" id="PS50102">
    <property type="entry name" value="RRM"/>
    <property type="match status" value="5"/>
</dbReference>
<name>MRD1_EREGS</name>
<sequence>MSRVIVKGLPIYLEEARLRAHFLKRLQQQGRGSEDQITDVKIVKDKSGNSRRFAFIGYRSEQDAFDAIEYFNGSFIDTARIEVAMAKSFADPRVPTPMREKRREALKRLREREDRILAEKRQKQTKPQHGIDAEISKNKQLQEFIETMNPKMAAAAANPMARAAEQPASANPLLSALHGAEDDEEVDMFQLSEQESDDEYTDLHQRPQSAEEDELEEPAVGQDLDAAPAPDAAEDGMATNQEVSDLEWLKNRRIRIRDGEDAEAAPAPQEQAAEEPAEQEVPQEDEVSAEEAALTKIRATGRLFLRNILYDATEEDFKQLFSPYGELEEVHVAVDTRTGQSKGFAYVLFKDPEHAANAYIELDKQIFQGRLLHILPADAKKTHRLDEFDLKNLPLKKQRELKRKATAAQQTFSWNSLFMNQDAVLSSVAAKLGMEKSQLIDPENSGSAVKQALAEAHVIGDVRKYFEARGVDLTQFEKFKKVTERDDRIILVKNFPHGTTREELAELFLPFGKIERLLMPPSGTIAIIQYRDVPAARGAFTKLSYKRFKEAILYLEKGPKDCFSREPRGDELLEGDAAPEDVKEIKKSVEDVMDADSKTPSSEATAIDGPTVSIFVKNLNFSTTSAQLAEKFKPFSGFVVAQVKTKPDPKNSDKKLSMGFGFIEFRTKEQAGAVIAAMDGAVIDGHKIQLKISHKQSSLPKTSKGSKKKISGKIIVKNLPFEATRKDVFELFSSFGQLKSVRVPKKFDKSARGFAFVEFLLPSEAENAMDQLQGVHLLGRRLVMQYAEQESDDVEEQISKMTMKMKKQAAVSKMGALRNSGKRKIDMSDDENDGLNGF</sequence>
<organism>
    <name type="scientific">Eremothecium gossypii (strain ATCC 10895 / CBS 109.51 / FGSC 9923 / NRRL Y-1056)</name>
    <name type="common">Yeast</name>
    <name type="synonym">Ashbya gossypii</name>
    <dbReference type="NCBI Taxonomy" id="284811"/>
    <lineage>
        <taxon>Eukaryota</taxon>
        <taxon>Fungi</taxon>
        <taxon>Dikarya</taxon>
        <taxon>Ascomycota</taxon>
        <taxon>Saccharomycotina</taxon>
        <taxon>Saccharomycetes</taxon>
        <taxon>Saccharomycetales</taxon>
        <taxon>Saccharomycetaceae</taxon>
        <taxon>Eremothecium</taxon>
    </lineage>
</organism>
<reference key="1">
    <citation type="journal article" date="2004" name="Science">
        <title>The Ashbya gossypii genome as a tool for mapping the ancient Saccharomyces cerevisiae genome.</title>
        <authorList>
            <person name="Dietrich F.S."/>
            <person name="Voegeli S."/>
            <person name="Brachat S."/>
            <person name="Lerch A."/>
            <person name="Gates K."/>
            <person name="Steiner S."/>
            <person name="Mohr C."/>
            <person name="Poehlmann R."/>
            <person name="Luedi P."/>
            <person name="Choi S."/>
            <person name="Wing R.A."/>
            <person name="Flavier A."/>
            <person name="Gaffney T.D."/>
            <person name="Philippsen P."/>
        </authorList>
    </citation>
    <scope>NUCLEOTIDE SEQUENCE [LARGE SCALE GENOMIC DNA]</scope>
    <source>
        <strain>ATCC 10895 / CBS 109.51 / FGSC 9923 / NRRL Y-1056</strain>
    </source>
</reference>
<reference key="2">
    <citation type="journal article" date="2013" name="G3 (Bethesda)">
        <title>Genomes of Ashbya fungi isolated from insects reveal four mating-type loci, numerous translocations, lack of transposons, and distinct gene duplications.</title>
        <authorList>
            <person name="Dietrich F.S."/>
            <person name="Voegeli S."/>
            <person name="Kuo S."/>
            <person name="Philippsen P."/>
        </authorList>
    </citation>
    <scope>GENOME REANNOTATION</scope>
    <scope>SEQUENCE REVISION TO 517 AND 550-551</scope>
    <source>
        <strain>ATCC 10895 / CBS 109.51 / FGSC 9923 / NRRL Y-1056</strain>
    </source>
</reference>
<feature type="chain" id="PRO_0000081636" description="Multiple RNA-binding domain-containing protein 1">
    <location>
        <begin position="1"/>
        <end position="838"/>
    </location>
</feature>
<feature type="domain" description="RRM 1" evidence="2">
    <location>
        <begin position="2"/>
        <end position="88"/>
    </location>
</feature>
<feature type="domain" description="RRM 2" evidence="2">
    <location>
        <begin position="301"/>
        <end position="379"/>
    </location>
</feature>
<feature type="domain" description="RRM 3" evidence="2">
    <location>
        <begin position="488"/>
        <end position="560"/>
    </location>
</feature>
<feature type="domain" description="RRM 4" evidence="2">
    <location>
        <begin position="612"/>
        <end position="695"/>
    </location>
</feature>
<feature type="domain" description="RRM 5" evidence="2">
    <location>
        <begin position="712"/>
        <end position="789"/>
    </location>
</feature>
<feature type="region of interest" description="Disordered" evidence="3">
    <location>
        <begin position="195"/>
        <end position="219"/>
    </location>
</feature>
<feature type="region of interest" description="Disordered" evidence="3">
    <location>
        <begin position="225"/>
        <end position="244"/>
    </location>
</feature>
<feature type="region of interest" description="Disordered" evidence="3">
    <location>
        <begin position="260"/>
        <end position="290"/>
    </location>
</feature>
<feature type="region of interest" description="Disordered" evidence="3">
    <location>
        <begin position="813"/>
        <end position="838"/>
    </location>
</feature>
<feature type="compositionally biased region" description="Acidic residues" evidence="3">
    <location>
        <begin position="272"/>
        <end position="289"/>
    </location>
</feature>
<feature type="compositionally biased region" description="Acidic residues" evidence="3">
    <location>
        <begin position="828"/>
        <end position="838"/>
    </location>
</feature>
<evidence type="ECO:0000250" key="1"/>
<evidence type="ECO:0000255" key="2">
    <source>
        <dbReference type="PROSITE-ProRule" id="PRU00176"/>
    </source>
</evidence>
<evidence type="ECO:0000256" key="3">
    <source>
        <dbReference type="SAM" id="MobiDB-lite"/>
    </source>
</evidence>
<evidence type="ECO:0000305" key="4"/>
<protein>
    <recommendedName>
        <fullName>Multiple RNA-binding domain-containing protein 1</fullName>
    </recommendedName>
</protein>
<gene>
    <name type="primary">MRD1</name>
    <name type="ordered locus">ADR035C</name>
</gene>
<proteinExistence type="inferred from homology"/>